<reference key="1">
    <citation type="journal article" date="2000" name="DNA Res.">
        <title>Structural analysis of Arabidopsis thaliana chromosome 3. II. Sequence features of the 4,251,695 bp regions covered by 90 P1, TAC and BAC clones.</title>
        <authorList>
            <person name="Kaneko T."/>
            <person name="Katoh T."/>
            <person name="Sato S."/>
            <person name="Nakamura Y."/>
            <person name="Asamizu E."/>
            <person name="Tabata S."/>
        </authorList>
    </citation>
    <scope>NUCLEOTIDE SEQUENCE [LARGE SCALE GENOMIC DNA]</scope>
    <source>
        <strain>cv. Columbia</strain>
    </source>
</reference>
<reference key="2">
    <citation type="journal article" date="2017" name="Plant J.">
        <title>Araport11: a complete reannotation of the Arabidopsis thaliana reference genome.</title>
        <authorList>
            <person name="Cheng C.Y."/>
            <person name="Krishnakumar V."/>
            <person name="Chan A.P."/>
            <person name="Thibaud-Nissen F."/>
            <person name="Schobel S."/>
            <person name="Town C.D."/>
        </authorList>
    </citation>
    <scope>GENOME REANNOTATION</scope>
    <source>
        <strain>cv. Columbia</strain>
    </source>
</reference>
<reference key="3">
    <citation type="journal article" date="2003" name="Science">
        <title>Empirical analysis of transcriptional activity in the Arabidopsis genome.</title>
        <authorList>
            <person name="Yamada K."/>
            <person name="Lim J."/>
            <person name="Dale J.M."/>
            <person name="Chen H."/>
            <person name="Shinn P."/>
            <person name="Palm C.J."/>
            <person name="Southwick A.M."/>
            <person name="Wu H.C."/>
            <person name="Kim C.J."/>
            <person name="Nguyen M."/>
            <person name="Pham P.K."/>
            <person name="Cheuk R.F."/>
            <person name="Karlin-Newmann G."/>
            <person name="Liu S.X."/>
            <person name="Lam B."/>
            <person name="Sakano H."/>
            <person name="Wu T."/>
            <person name="Yu G."/>
            <person name="Miranda M."/>
            <person name="Quach H.L."/>
            <person name="Tripp M."/>
            <person name="Chang C.H."/>
            <person name="Lee J.M."/>
            <person name="Toriumi M.J."/>
            <person name="Chan M.M."/>
            <person name="Tang C.C."/>
            <person name="Onodera C.S."/>
            <person name="Deng J.M."/>
            <person name="Akiyama K."/>
            <person name="Ansari Y."/>
            <person name="Arakawa T."/>
            <person name="Banh J."/>
            <person name="Banno F."/>
            <person name="Bowser L."/>
            <person name="Brooks S.Y."/>
            <person name="Carninci P."/>
            <person name="Chao Q."/>
            <person name="Choy N."/>
            <person name="Enju A."/>
            <person name="Goldsmith A.D."/>
            <person name="Gurjal M."/>
            <person name="Hansen N.F."/>
            <person name="Hayashizaki Y."/>
            <person name="Johnson-Hopson C."/>
            <person name="Hsuan V.W."/>
            <person name="Iida K."/>
            <person name="Karnes M."/>
            <person name="Khan S."/>
            <person name="Koesema E."/>
            <person name="Ishida J."/>
            <person name="Jiang P.X."/>
            <person name="Jones T."/>
            <person name="Kawai J."/>
            <person name="Kamiya A."/>
            <person name="Meyers C."/>
            <person name="Nakajima M."/>
            <person name="Narusaka M."/>
            <person name="Seki M."/>
            <person name="Sakurai T."/>
            <person name="Satou M."/>
            <person name="Tamse R."/>
            <person name="Vaysberg M."/>
            <person name="Wallender E.K."/>
            <person name="Wong C."/>
            <person name="Yamamura Y."/>
            <person name="Yuan S."/>
            <person name="Shinozaki K."/>
            <person name="Davis R.W."/>
            <person name="Theologis A."/>
            <person name="Ecker J.R."/>
        </authorList>
    </citation>
    <scope>NUCLEOTIDE SEQUENCE [LARGE SCALE MRNA]</scope>
    <source>
        <strain>cv. Columbia</strain>
    </source>
</reference>
<reference key="4">
    <citation type="journal article" date="2001" name="J. Biol. Chem.">
        <title>The Arabidopsis thaliana ABC protein superfamily, a complete inventory.</title>
        <authorList>
            <person name="Sanchez-Fernandez R."/>
            <person name="Davies T.G."/>
            <person name="Coleman J.O."/>
            <person name="Rea P.A."/>
        </authorList>
    </citation>
    <scope>GENE FAMILY</scope>
    <scope>NOMENCLATURE</scope>
</reference>
<reference key="5">
    <citation type="journal article" date="2002" name="Planta">
        <title>Multifunctionality of plant ABC transporters -- more than just detoxifiers.</title>
        <authorList>
            <person name="Martinoia E."/>
            <person name="Klein M."/>
            <person name="Geisler M."/>
            <person name="Bovet L."/>
            <person name="Forestier C."/>
            <person name="Kolukisaoglu H.U."/>
            <person name="Mueller-Roeber B."/>
            <person name="Schulz B."/>
        </authorList>
    </citation>
    <scope>GENE FAMILY</scope>
</reference>
<reference key="6">
    <citation type="journal article" date="2004" name="J. Mol. Evol.">
        <title>A plant orthologue of RNase L inhibitor (RLI) is induced in plants showing RNA interference.</title>
        <authorList>
            <person name="Braz A.S.K."/>
            <person name="Finnegan J."/>
            <person name="Waterhouse P."/>
            <person name="Margis R."/>
        </authorList>
    </citation>
    <scope>TISSUE SPECIFICITY</scope>
</reference>
<reference key="7">
    <citation type="journal article" date="2008" name="Trends Plant Sci.">
        <title>Plant ABC proteins - a unified nomenclature and updated inventory.</title>
        <authorList>
            <person name="Verrier P.J."/>
            <person name="Bird D."/>
            <person name="Burla B."/>
            <person name="Dassa E."/>
            <person name="Forestier C."/>
            <person name="Geisler M."/>
            <person name="Klein M."/>
            <person name="Kolukisaoglu H.U."/>
            <person name="Lee Y."/>
            <person name="Martinoia E."/>
            <person name="Murphy A."/>
            <person name="Rea P.A."/>
            <person name="Samuels L."/>
            <person name="Schulz B."/>
            <person name="Spalding E.J."/>
            <person name="Yazaki K."/>
            <person name="Theodoulou F.L."/>
        </authorList>
    </citation>
    <scope>GENE FAMILY</scope>
    <scope>NOMENCLATURE</scope>
</reference>
<protein>
    <recommendedName>
        <fullName>ABC transporter E family member 1</fullName>
        <shortName>ABC transporter ABCE.1</shortName>
        <shortName>AtABCE1</shortName>
    </recommendedName>
    <alternativeName>
        <fullName>RNase L inhibitor-like protein 1</fullName>
        <shortName>AtRLI1</shortName>
        <shortName>AthaRLI1</shortName>
    </alternativeName>
</protein>
<keyword id="KW-0004">4Fe-4S</keyword>
<keyword id="KW-0067">ATP-binding</keyword>
<keyword id="KW-0408">Iron</keyword>
<keyword id="KW-0411">Iron-sulfur</keyword>
<keyword id="KW-0472">Membrane</keyword>
<keyword id="KW-0479">Metal-binding</keyword>
<keyword id="KW-0547">Nucleotide-binding</keyword>
<keyword id="KW-1185">Reference proteome</keyword>
<keyword id="KW-0677">Repeat</keyword>
<keyword id="KW-0813">Transport</keyword>
<name>AB1E_ARATH</name>
<gene>
    <name type="primary">ABCE1</name>
    <name type="synonym">RLI1</name>
    <name type="ordered locus">At3g13640</name>
    <name type="ORF">MMM17.7</name>
</gene>
<comment type="subcellular location">
    <subcellularLocation>
        <location evidence="4">Membrane</location>
    </subcellularLocation>
</comment>
<comment type="tissue specificity">
    <text evidence="3">Expressed in roots, stems, leaves, flowers and siliques.</text>
</comment>
<comment type="similarity">
    <text evidence="4">Belongs to the ABC transporter superfamily. ABCE family.</text>
</comment>
<accession>Q9LID6</accession>
<proteinExistence type="evidence at transcript level"/>
<evidence type="ECO:0000255" key="1">
    <source>
        <dbReference type="PROSITE-ProRule" id="PRU00434"/>
    </source>
</evidence>
<evidence type="ECO:0000255" key="2">
    <source>
        <dbReference type="PROSITE-ProRule" id="PRU00711"/>
    </source>
</evidence>
<evidence type="ECO:0000269" key="3">
    <source>
    </source>
</evidence>
<evidence type="ECO:0000305" key="4"/>
<dbReference type="EMBL" id="AP001307">
    <property type="protein sequence ID" value="BAB01911.1"/>
    <property type="molecule type" value="Genomic_DNA"/>
</dbReference>
<dbReference type="EMBL" id="CP002686">
    <property type="protein sequence ID" value="AEE75386.1"/>
    <property type="molecule type" value="Genomic_DNA"/>
</dbReference>
<dbReference type="EMBL" id="BT003947">
    <property type="protein sequence ID" value="AAO41992.1"/>
    <property type="molecule type" value="mRNA"/>
</dbReference>
<dbReference type="EMBL" id="BT005042">
    <property type="protein sequence ID" value="AAO50575.1"/>
    <property type="molecule type" value="mRNA"/>
</dbReference>
<dbReference type="RefSeq" id="NP_187973.1">
    <property type="nucleotide sequence ID" value="NM_112210.3"/>
</dbReference>
<dbReference type="SMR" id="Q9LID6"/>
<dbReference type="BioGRID" id="5902">
    <property type="interactions" value="1"/>
</dbReference>
<dbReference type="FunCoup" id="Q9LID6">
    <property type="interactions" value="3748"/>
</dbReference>
<dbReference type="IntAct" id="Q9LID6">
    <property type="interactions" value="1"/>
</dbReference>
<dbReference type="STRING" id="3702.Q9LID6"/>
<dbReference type="PaxDb" id="3702-AT3G13640.1"/>
<dbReference type="ProteomicsDB" id="244600"/>
<dbReference type="EnsemblPlants" id="AT3G13640.1">
    <property type="protein sequence ID" value="AT3G13640.1"/>
    <property type="gene ID" value="AT3G13640"/>
</dbReference>
<dbReference type="GeneID" id="820568"/>
<dbReference type="Gramene" id="AT3G13640.1">
    <property type="protein sequence ID" value="AT3G13640.1"/>
    <property type="gene ID" value="AT3G13640"/>
</dbReference>
<dbReference type="KEGG" id="ath:AT3G13640"/>
<dbReference type="Araport" id="AT3G13640"/>
<dbReference type="TAIR" id="AT3G13640">
    <property type="gene designation" value="ABCE1"/>
</dbReference>
<dbReference type="eggNOG" id="KOG0063">
    <property type="taxonomic scope" value="Eukaryota"/>
</dbReference>
<dbReference type="HOGENOM" id="CLU_017344_4_1_1"/>
<dbReference type="InParanoid" id="Q9LID6"/>
<dbReference type="OMA" id="IKPQHVD"/>
<dbReference type="PhylomeDB" id="Q9LID6"/>
<dbReference type="PRO" id="PR:Q9LID6"/>
<dbReference type="Proteomes" id="UP000006548">
    <property type="component" value="Chromosome 3"/>
</dbReference>
<dbReference type="ExpressionAtlas" id="Q9LID6">
    <property type="expression patterns" value="baseline and differential"/>
</dbReference>
<dbReference type="GO" id="GO:0016020">
    <property type="term" value="C:membrane"/>
    <property type="evidence" value="ECO:0007669"/>
    <property type="project" value="UniProtKB-SubCell"/>
</dbReference>
<dbReference type="GO" id="GO:0051539">
    <property type="term" value="F:4 iron, 4 sulfur cluster binding"/>
    <property type="evidence" value="ECO:0007669"/>
    <property type="project" value="UniProtKB-KW"/>
</dbReference>
<dbReference type="GO" id="GO:0005524">
    <property type="term" value="F:ATP binding"/>
    <property type="evidence" value="ECO:0007669"/>
    <property type="project" value="UniProtKB-KW"/>
</dbReference>
<dbReference type="GO" id="GO:0016887">
    <property type="term" value="F:ATP hydrolysis activity"/>
    <property type="evidence" value="ECO:0007669"/>
    <property type="project" value="InterPro"/>
</dbReference>
<dbReference type="GO" id="GO:0046872">
    <property type="term" value="F:metal ion binding"/>
    <property type="evidence" value="ECO:0007669"/>
    <property type="project" value="UniProtKB-KW"/>
</dbReference>
<dbReference type="CDD" id="cd03236">
    <property type="entry name" value="ABC_RNaseL_inhibitor_domain1"/>
    <property type="match status" value="1"/>
</dbReference>
<dbReference type="FunFam" id="3.40.50.300:FF:000144">
    <property type="entry name" value="ATP-binding cassette sub-family E member 1"/>
    <property type="match status" value="1"/>
</dbReference>
<dbReference type="FunFam" id="3.40.50.300:FF:000152">
    <property type="entry name" value="ATP-binding cassette, sub-family E, member 1"/>
    <property type="match status" value="1"/>
</dbReference>
<dbReference type="Gene3D" id="3.40.50.300">
    <property type="entry name" value="P-loop containing nucleotide triphosphate hydrolases"/>
    <property type="match status" value="2"/>
</dbReference>
<dbReference type="InterPro" id="IPR017896">
    <property type="entry name" value="4Fe4S_Fe-S-bd"/>
</dbReference>
<dbReference type="InterPro" id="IPR017900">
    <property type="entry name" value="4Fe4S_Fe_S_CS"/>
</dbReference>
<dbReference type="InterPro" id="IPR003593">
    <property type="entry name" value="AAA+_ATPase"/>
</dbReference>
<dbReference type="InterPro" id="IPR003439">
    <property type="entry name" value="ABC_transporter-like_ATP-bd"/>
</dbReference>
<dbReference type="InterPro" id="IPR017871">
    <property type="entry name" value="ABC_transporter-like_CS"/>
</dbReference>
<dbReference type="InterPro" id="IPR027417">
    <property type="entry name" value="P-loop_NTPase"/>
</dbReference>
<dbReference type="InterPro" id="IPR013283">
    <property type="entry name" value="RLI1"/>
</dbReference>
<dbReference type="InterPro" id="IPR034348">
    <property type="entry name" value="RLI_dom_1"/>
</dbReference>
<dbReference type="InterPro" id="IPR007209">
    <property type="entry name" value="RNaseL-inhib-like_metal-bd_dom"/>
</dbReference>
<dbReference type="NCBIfam" id="NF009945">
    <property type="entry name" value="PRK13409.1"/>
    <property type="match status" value="1"/>
</dbReference>
<dbReference type="PANTHER" id="PTHR19248">
    <property type="entry name" value="ATP-BINDING TRANSPORT PROTEIN-RELATED"/>
    <property type="match status" value="1"/>
</dbReference>
<dbReference type="Pfam" id="PF00005">
    <property type="entry name" value="ABC_tran"/>
    <property type="match status" value="2"/>
</dbReference>
<dbReference type="Pfam" id="PF00037">
    <property type="entry name" value="Fer4"/>
    <property type="match status" value="1"/>
</dbReference>
<dbReference type="Pfam" id="PF04068">
    <property type="entry name" value="Fer4_RLI"/>
    <property type="match status" value="1"/>
</dbReference>
<dbReference type="PRINTS" id="PR01868">
    <property type="entry name" value="ABCEFAMILY"/>
</dbReference>
<dbReference type="SMART" id="SM00382">
    <property type="entry name" value="AAA"/>
    <property type="match status" value="2"/>
</dbReference>
<dbReference type="SUPFAM" id="SSF54862">
    <property type="entry name" value="4Fe-4S ferredoxins"/>
    <property type="match status" value="1"/>
</dbReference>
<dbReference type="SUPFAM" id="SSF52540">
    <property type="entry name" value="P-loop containing nucleoside triphosphate hydrolases"/>
    <property type="match status" value="2"/>
</dbReference>
<dbReference type="PROSITE" id="PS00198">
    <property type="entry name" value="4FE4S_FER_1"/>
    <property type="match status" value="1"/>
</dbReference>
<dbReference type="PROSITE" id="PS51379">
    <property type="entry name" value="4FE4S_FER_2"/>
    <property type="match status" value="2"/>
</dbReference>
<dbReference type="PROSITE" id="PS00211">
    <property type="entry name" value="ABC_TRANSPORTER_1"/>
    <property type="match status" value="1"/>
</dbReference>
<dbReference type="PROSITE" id="PS50893">
    <property type="entry name" value="ABC_TRANSPORTER_2"/>
    <property type="match status" value="2"/>
</dbReference>
<sequence length="603" mass="68161">MSDRLTRIAIVSEDRCKPKKCRQECKKSCPVVKTGKLCIEVGSTSKSAFISEELCIGCGICVKKCPFEAIQIINLPKDLAKDTTHRYGANGFKLHRLPIPRPGQVLGLVGTNGIGKSTALKILAGKLKPNLGRFNTPPDWEEILTHFRGSELQSYFIRVVEENLKTAIKPQHVDYIKEVVRGNLGKMLEKLDERGLMEEICADMELNQVLEREARQVSGGELQRFAIAAVFVKKADIYMFDEPSSYLDVRQRLKAAQVIRSLLRHDSYVIVVEHDLSVLDYLSDFVCCLYGKPGAYGVVTLPFSVREGINVFLAGFIPTENLRFRDESLTFRVSETTQENDGEVKSYARYKYPNMTKQLGDFKLEVMEGEFTDSQIIVMLGENGTGKTTFIRMLAGAFPREEGVQSEIPEFNVSYKPQGNDSKRECTVRQLLHDKIRDACAHPQFMSDVIRPLQIEQLMDQVVKTLSGGEKQRVAITLCLGKPADIYLIDEPSAHLDSEQRITASKVIKRFILHAKKTAFIVEHDFIMATYLADRVIVYEGQPAVKCIAHSPQSLLSGMNHFLSHLNITFRRDPTNFRPRINKLESIKDKEQKTAGSYYYLDD</sequence>
<feature type="chain" id="PRO_0000379137" description="ABC transporter E family member 1">
    <location>
        <begin position="1"/>
        <end position="603"/>
    </location>
</feature>
<feature type="domain" description="4Fe-4S ferredoxin-type 1" evidence="2">
    <location>
        <begin position="7"/>
        <end position="39"/>
    </location>
</feature>
<feature type="domain" description="4Fe-4S ferredoxin-type 2" evidence="2">
    <location>
        <begin position="46"/>
        <end position="75"/>
    </location>
</feature>
<feature type="domain" description="ABC transporter 1" evidence="1">
    <location>
        <begin position="70"/>
        <end position="315"/>
    </location>
</feature>
<feature type="domain" description="ABC transporter 2" evidence="1">
    <location>
        <begin position="344"/>
        <end position="566"/>
    </location>
</feature>
<feature type="binding site" evidence="1">
    <location>
        <begin position="110"/>
        <end position="117"/>
    </location>
    <ligand>
        <name>ATP</name>
        <dbReference type="ChEBI" id="CHEBI:30616"/>
    </ligand>
</feature>
<feature type="binding site" evidence="1">
    <location>
        <begin position="381"/>
        <end position="388"/>
    </location>
    <ligand>
        <name>ATP</name>
        <dbReference type="ChEBI" id="CHEBI:30616"/>
    </ligand>
</feature>
<organism>
    <name type="scientific">Arabidopsis thaliana</name>
    <name type="common">Mouse-ear cress</name>
    <dbReference type="NCBI Taxonomy" id="3702"/>
    <lineage>
        <taxon>Eukaryota</taxon>
        <taxon>Viridiplantae</taxon>
        <taxon>Streptophyta</taxon>
        <taxon>Embryophyta</taxon>
        <taxon>Tracheophyta</taxon>
        <taxon>Spermatophyta</taxon>
        <taxon>Magnoliopsida</taxon>
        <taxon>eudicotyledons</taxon>
        <taxon>Gunneridae</taxon>
        <taxon>Pentapetalae</taxon>
        <taxon>rosids</taxon>
        <taxon>malvids</taxon>
        <taxon>Brassicales</taxon>
        <taxon>Brassicaceae</taxon>
        <taxon>Camelineae</taxon>
        <taxon>Arabidopsis</taxon>
    </lineage>
</organism>